<feature type="chain" id="PRO_0000163680" description="1-deoxy-D-xylulose 5-phosphate reductoisomerase">
    <location>
        <begin position="1"/>
        <end position="377"/>
    </location>
</feature>
<feature type="binding site" evidence="1">
    <location>
        <position position="20"/>
    </location>
    <ligand>
        <name>NADPH</name>
        <dbReference type="ChEBI" id="CHEBI:57783"/>
    </ligand>
</feature>
<feature type="binding site" evidence="1">
    <location>
        <position position="21"/>
    </location>
    <ligand>
        <name>NADPH</name>
        <dbReference type="ChEBI" id="CHEBI:57783"/>
    </ligand>
</feature>
<feature type="binding site" evidence="1">
    <location>
        <position position="23"/>
    </location>
    <ligand>
        <name>NADPH</name>
        <dbReference type="ChEBI" id="CHEBI:57783"/>
    </ligand>
</feature>
<feature type="binding site" evidence="1">
    <location>
        <position position="46"/>
    </location>
    <ligand>
        <name>NADPH</name>
        <dbReference type="ChEBI" id="CHEBI:57783"/>
    </ligand>
</feature>
<feature type="binding site" evidence="1">
    <location>
        <position position="115"/>
    </location>
    <ligand>
        <name>NADPH</name>
        <dbReference type="ChEBI" id="CHEBI:57783"/>
    </ligand>
</feature>
<feature type="binding site" evidence="1">
    <location>
        <position position="116"/>
    </location>
    <ligand>
        <name>1-deoxy-D-xylulose 5-phosphate</name>
        <dbReference type="ChEBI" id="CHEBI:57792"/>
    </ligand>
</feature>
<feature type="binding site" evidence="1">
    <location>
        <position position="117"/>
    </location>
    <ligand>
        <name>NADPH</name>
        <dbReference type="ChEBI" id="CHEBI:57783"/>
    </ligand>
</feature>
<feature type="binding site" evidence="1">
    <location>
        <position position="141"/>
    </location>
    <ligand>
        <name>Mn(2+)</name>
        <dbReference type="ChEBI" id="CHEBI:29035"/>
    </ligand>
</feature>
<feature type="binding site" evidence="1">
    <location>
        <position position="142"/>
    </location>
    <ligand>
        <name>1-deoxy-D-xylulose 5-phosphate</name>
        <dbReference type="ChEBI" id="CHEBI:57792"/>
    </ligand>
</feature>
<feature type="binding site" evidence="1">
    <location>
        <position position="143"/>
    </location>
    <ligand>
        <name>1-deoxy-D-xylulose 5-phosphate</name>
        <dbReference type="ChEBI" id="CHEBI:57792"/>
    </ligand>
</feature>
<feature type="binding site" evidence="1">
    <location>
        <position position="143"/>
    </location>
    <ligand>
        <name>Mn(2+)</name>
        <dbReference type="ChEBI" id="CHEBI:29035"/>
    </ligand>
</feature>
<feature type="binding site" evidence="1">
    <location>
        <position position="166"/>
    </location>
    <ligand>
        <name>1-deoxy-D-xylulose 5-phosphate</name>
        <dbReference type="ChEBI" id="CHEBI:57792"/>
    </ligand>
</feature>
<feature type="binding site" evidence="1">
    <location>
        <position position="189"/>
    </location>
    <ligand>
        <name>1-deoxy-D-xylulose 5-phosphate</name>
        <dbReference type="ChEBI" id="CHEBI:57792"/>
    </ligand>
</feature>
<feature type="binding site" evidence="1">
    <location>
        <position position="195"/>
    </location>
    <ligand>
        <name>NADPH</name>
        <dbReference type="ChEBI" id="CHEBI:57783"/>
    </ligand>
</feature>
<feature type="binding site" evidence="1">
    <location>
        <position position="202"/>
    </location>
    <ligand>
        <name>1-deoxy-D-xylulose 5-phosphate</name>
        <dbReference type="ChEBI" id="CHEBI:57792"/>
    </ligand>
</feature>
<feature type="binding site" evidence="1">
    <location>
        <position position="207"/>
    </location>
    <ligand>
        <name>1-deoxy-D-xylulose 5-phosphate</name>
        <dbReference type="ChEBI" id="CHEBI:57792"/>
    </ligand>
</feature>
<feature type="binding site" evidence="1">
    <location>
        <position position="208"/>
    </location>
    <ligand>
        <name>1-deoxy-D-xylulose 5-phosphate</name>
        <dbReference type="ChEBI" id="CHEBI:57792"/>
    </ligand>
</feature>
<feature type="binding site" evidence="1">
    <location>
        <position position="211"/>
    </location>
    <ligand>
        <name>1-deoxy-D-xylulose 5-phosphate</name>
        <dbReference type="ChEBI" id="CHEBI:57792"/>
    </ligand>
</feature>
<feature type="binding site" evidence="1">
    <location>
        <position position="211"/>
    </location>
    <ligand>
        <name>Mn(2+)</name>
        <dbReference type="ChEBI" id="CHEBI:29035"/>
    </ligand>
</feature>
<comment type="function">
    <text evidence="1">Catalyzes the NADPH-dependent rearrangement and reduction of 1-deoxy-D-xylulose-5-phosphate (DXP) to 2-C-methyl-D-erythritol 4-phosphate (MEP).</text>
</comment>
<comment type="catalytic activity">
    <reaction evidence="1">
        <text>2-C-methyl-D-erythritol 4-phosphate + NADP(+) = 1-deoxy-D-xylulose 5-phosphate + NADPH + H(+)</text>
        <dbReference type="Rhea" id="RHEA:13717"/>
        <dbReference type="ChEBI" id="CHEBI:15378"/>
        <dbReference type="ChEBI" id="CHEBI:57783"/>
        <dbReference type="ChEBI" id="CHEBI:57792"/>
        <dbReference type="ChEBI" id="CHEBI:58262"/>
        <dbReference type="ChEBI" id="CHEBI:58349"/>
        <dbReference type="EC" id="1.1.1.267"/>
    </reaction>
    <physiologicalReaction direction="right-to-left" evidence="1">
        <dbReference type="Rhea" id="RHEA:13719"/>
    </physiologicalReaction>
</comment>
<comment type="cofactor">
    <cofactor evidence="1">
        <name>Mg(2+)</name>
        <dbReference type="ChEBI" id="CHEBI:18420"/>
    </cofactor>
    <cofactor evidence="1">
        <name>Mn(2+)</name>
        <dbReference type="ChEBI" id="CHEBI:29035"/>
    </cofactor>
</comment>
<comment type="pathway">
    <text evidence="1">Isoprenoid biosynthesis; isopentenyl diphosphate biosynthesis via DXP pathway; isopentenyl diphosphate from 1-deoxy-D-xylulose 5-phosphate: step 1/6.</text>
</comment>
<comment type="similarity">
    <text evidence="1">Belongs to the DXR family.</text>
</comment>
<name>DXR_MALP2</name>
<proteinExistence type="inferred from homology"/>
<gene>
    <name evidence="1" type="primary">dxr</name>
    <name type="ordered locus">MYPE1470</name>
</gene>
<protein>
    <recommendedName>
        <fullName evidence="1">1-deoxy-D-xylulose 5-phosphate reductoisomerase</fullName>
        <shortName evidence="1">DXP reductoisomerase</shortName>
        <ecNumber evidence="1">1.1.1.267</ecNumber>
    </recommendedName>
    <alternativeName>
        <fullName evidence="1">1-deoxyxylulose-5-phosphate reductoisomerase</fullName>
    </alternativeName>
    <alternativeName>
        <fullName evidence="1">2-C-methyl-D-erythritol 4-phosphate synthase</fullName>
    </alternativeName>
</protein>
<accession>Q8EWQ6</accession>
<keyword id="KW-0414">Isoprene biosynthesis</keyword>
<keyword id="KW-0464">Manganese</keyword>
<keyword id="KW-0479">Metal-binding</keyword>
<keyword id="KW-0521">NADP</keyword>
<keyword id="KW-0560">Oxidoreductase</keyword>
<keyword id="KW-1185">Reference proteome</keyword>
<sequence length="377" mass="43271">MLEGEKMENKKKKVLVFGATGNIGFSSLEIIEKENYELVGFSFNNNYEKALEIINRFPNALVFSPSVKTKNTVNSFEELLEKTNPDIILNALVGFSGLHITLLALKNNVDLALANKESLVVAGWLIEDLKRSSSSRIYPVDSEHSSLYDSLKNNNKEIKELIITCSGGPFYKKEFNELLNINFADAVKHPNWNMGKKISIDSATMMNKCFEIIEAYYLFNTKKIKVYQHGQSIIHSMIKFTDNSYIANMSVPDMKLSIQQGLSGYESKTNLINDLSFNNLNLTFSEIDLDKWKPIHWAYDFLENQNRAIPIIMNAANEEAIVLFEENKIKFLDIFEIIEKAIIALENTEVNDLKDILNLNKNTRKYVYDFSKNKFRY</sequence>
<dbReference type="EC" id="1.1.1.267" evidence="1"/>
<dbReference type="EMBL" id="BA000026">
    <property type="protein sequence ID" value="BAC43938.1"/>
    <property type="molecule type" value="Genomic_DNA"/>
</dbReference>
<dbReference type="SMR" id="Q8EWQ6"/>
<dbReference type="FunCoup" id="Q8EWQ6">
    <property type="interactions" value="235"/>
</dbReference>
<dbReference type="STRING" id="272633.gene:10731246"/>
<dbReference type="KEGG" id="mpe:MYPE1470"/>
<dbReference type="eggNOG" id="COG0743">
    <property type="taxonomic scope" value="Bacteria"/>
</dbReference>
<dbReference type="HOGENOM" id="CLU_035714_0_0_14"/>
<dbReference type="InParanoid" id="Q8EWQ6"/>
<dbReference type="UniPathway" id="UPA00056">
    <property type="reaction ID" value="UER00092"/>
</dbReference>
<dbReference type="Proteomes" id="UP000002522">
    <property type="component" value="Chromosome"/>
</dbReference>
<dbReference type="GO" id="GO:0030604">
    <property type="term" value="F:1-deoxy-D-xylulose-5-phosphate reductoisomerase activity"/>
    <property type="evidence" value="ECO:0007669"/>
    <property type="project" value="UniProtKB-UniRule"/>
</dbReference>
<dbReference type="GO" id="GO:0030145">
    <property type="term" value="F:manganese ion binding"/>
    <property type="evidence" value="ECO:0007669"/>
    <property type="project" value="TreeGrafter"/>
</dbReference>
<dbReference type="GO" id="GO:0070402">
    <property type="term" value="F:NADPH binding"/>
    <property type="evidence" value="ECO:0007669"/>
    <property type="project" value="InterPro"/>
</dbReference>
<dbReference type="GO" id="GO:0051484">
    <property type="term" value="P:isopentenyl diphosphate biosynthetic process, methylerythritol 4-phosphate pathway involved in terpenoid biosynthetic process"/>
    <property type="evidence" value="ECO:0007669"/>
    <property type="project" value="TreeGrafter"/>
</dbReference>
<dbReference type="Gene3D" id="1.10.1740.10">
    <property type="match status" value="1"/>
</dbReference>
<dbReference type="Gene3D" id="3.40.50.720">
    <property type="entry name" value="NAD(P)-binding Rossmann-like Domain"/>
    <property type="match status" value="1"/>
</dbReference>
<dbReference type="HAMAP" id="MF_00183">
    <property type="entry name" value="DXP_reductoisom"/>
    <property type="match status" value="1"/>
</dbReference>
<dbReference type="InterPro" id="IPR003821">
    <property type="entry name" value="DXP_reductoisomerase"/>
</dbReference>
<dbReference type="InterPro" id="IPR013644">
    <property type="entry name" value="DXP_reductoisomerase_C"/>
</dbReference>
<dbReference type="InterPro" id="IPR013512">
    <property type="entry name" value="DXP_reductoisomerase_N"/>
</dbReference>
<dbReference type="InterPro" id="IPR026877">
    <property type="entry name" value="DXPR_C"/>
</dbReference>
<dbReference type="InterPro" id="IPR036169">
    <property type="entry name" value="DXPR_C_sf"/>
</dbReference>
<dbReference type="InterPro" id="IPR036291">
    <property type="entry name" value="NAD(P)-bd_dom_sf"/>
</dbReference>
<dbReference type="NCBIfam" id="TIGR00243">
    <property type="entry name" value="Dxr"/>
    <property type="match status" value="1"/>
</dbReference>
<dbReference type="PANTHER" id="PTHR30525">
    <property type="entry name" value="1-DEOXY-D-XYLULOSE 5-PHOSPHATE REDUCTOISOMERASE"/>
    <property type="match status" value="1"/>
</dbReference>
<dbReference type="PANTHER" id="PTHR30525:SF0">
    <property type="entry name" value="1-DEOXY-D-XYLULOSE 5-PHOSPHATE REDUCTOISOMERASE, CHLOROPLASTIC"/>
    <property type="match status" value="1"/>
</dbReference>
<dbReference type="Pfam" id="PF08436">
    <property type="entry name" value="DXP_redisom_C"/>
    <property type="match status" value="1"/>
</dbReference>
<dbReference type="Pfam" id="PF02670">
    <property type="entry name" value="DXP_reductoisom"/>
    <property type="match status" value="1"/>
</dbReference>
<dbReference type="Pfam" id="PF13288">
    <property type="entry name" value="DXPR_C"/>
    <property type="match status" value="1"/>
</dbReference>
<dbReference type="PIRSF" id="PIRSF006205">
    <property type="entry name" value="Dxp_reductismrs"/>
    <property type="match status" value="1"/>
</dbReference>
<dbReference type="SUPFAM" id="SSF69055">
    <property type="entry name" value="1-deoxy-D-xylulose-5-phosphate reductoisomerase, C-terminal domain"/>
    <property type="match status" value="1"/>
</dbReference>
<dbReference type="SUPFAM" id="SSF55347">
    <property type="entry name" value="Glyceraldehyde-3-phosphate dehydrogenase-like, C-terminal domain"/>
    <property type="match status" value="1"/>
</dbReference>
<dbReference type="SUPFAM" id="SSF51735">
    <property type="entry name" value="NAD(P)-binding Rossmann-fold domains"/>
    <property type="match status" value="1"/>
</dbReference>
<evidence type="ECO:0000255" key="1">
    <source>
        <dbReference type="HAMAP-Rule" id="MF_00183"/>
    </source>
</evidence>
<reference key="1">
    <citation type="journal article" date="2002" name="Nucleic Acids Res.">
        <title>The complete genomic sequence of Mycoplasma penetrans, an intracellular bacterial pathogen in humans.</title>
        <authorList>
            <person name="Sasaki Y."/>
            <person name="Ishikawa J."/>
            <person name="Yamashita A."/>
            <person name="Oshima K."/>
            <person name="Kenri T."/>
            <person name="Furuya K."/>
            <person name="Yoshino C."/>
            <person name="Horino A."/>
            <person name="Shiba T."/>
            <person name="Sasaki T."/>
            <person name="Hattori M."/>
        </authorList>
    </citation>
    <scope>NUCLEOTIDE SEQUENCE [LARGE SCALE GENOMIC DNA]</scope>
    <source>
        <strain>HF-2</strain>
    </source>
</reference>
<organism>
    <name type="scientific">Malacoplasma penetrans (strain HF-2)</name>
    <name type="common">Mycoplasma penetrans</name>
    <dbReference type="NCBI Taxonomy" id="272633"/>
    <lineage>
        <taxon>Bacteria</taxon>
        <taxon>Bacillati</taxon>
        <taxon>Mycoplasmatota</taxon>
        <taxon>Mycoplasmoidales</taxon>
        <taxon>Mycoplasmoidaceae</taxon>
        <taxon>Malacoplasma</taxon>
    </lineage>
</organism>